<reference key="1">
    <citation type="journal article" date="1998" name="Plant Cell Physiol.">
        <title>Cloning and bacterial expression of sesquiterpene cyclase, a key branch point enzyme for the synthesis of sesquiterpenoid phytoalexin capsidiol in UV-challenged leaves of Capsicum annuum.</title>
        <authorList>
            <person name="Back K."/>
            <person name="He S."/>
            <person name="Kim K.U."/>
            <person name="Shin D.H."/>
        </authorList>
    </citation>
    <scope>NUCLEOTIDE SEQUENCE [MRNA]</scope>
    <scope>FUNCTION</scope>
    <scope>CATALYTIC ACTIVITY</scope>
    <scope>INDUCTION BY UV TREATMENT</scope>
    <scope>TISSUE SPECIFICITY</scope>
    <source>
        <tissue>Leaf</tissue>
    </source>
</reference>
<evidence type="ECO:0000250" key="1"/>
<evidence type="ECO:0000269" key="2">
    <source>
    </source>
</evidence>
<evidence type="ECO:0000305" key="3"/>
<proteinExistence type="evidence at protein level"/>
<organism>
    <name type="scientific">Capsicum annuum</name>
    <name type="common">Capsicum pepper</name>
    <dbReference type="NCBI Taxonomy" id="4072"/>
    <lineage>
        <taxon>Eukaryota</taxon>
        <taxon>Viridiplantae</taxon>
        <taxon>Streptophyta</taxon>
        <taxon>Embryophyta</taxon>
        <taxon>Tracheophyta</taxon>
        <taxon>Spermatophyta</taxon>
        <taxon>Magnoliopsida</taxon>
        <taxon>eudicotyledons</taxon>
        <taxon>Gunneridae</taxon>
        <taxon>Pentapetalae</taxon>
        <taxon>asterids</taxon>
        <taxon>lamiids</taxon>
        <taxon>Solanales</taxon>
        <taxon>Solanaceae</taxon>
        <taxon>Solanoideae</taxon>
        <taxon>Capsiceae</taxon>
        <taxon>Capsicum</taxon>
    </lineage>
</organism>
<gene>
    <name type="primary">EAS</name>
    <name type="synonym">PEAS</name>
</gene>
<feature type="chain" id="PRO_0000412243" description="5-epiaristolochene synthase">
    <location>
        <begin position="1"/>
        <end position="559"/>
    </location>
</feature>
<feature type="short sequence motif" description="DDXXD motif">
    <location>
        <begin position="312"/>
        <end position="316"/>
    </location>
</feature>
<feature type="binding site" evidence="1">
    <location>
        <position position="312"/>
    </location>
    <ligand>
        <name>Mg(2+)</name>
        <dbReference type="ChEBI" id="CHEBI:18420"/>
        <label>1</label>
    </ligand>
</feature>
<feature type="binding site" evidence="1">
    <location>
        <position position="312"/>
    </location>
    <ligand>
        <name>Mg(2+)</name>
        <dbReference type="ChEBI" id="CHEBI:18420"/>
        <label>2</label>
    </ligand>
</feature>
<feature type="binding site" evidence="1">
    <location>
        <position position="316"/>
    </location>
    <ligand>
        <name>Mg(2+)</name>
        <dbReference type="ChEBI" id="CHEBI:18420"/>
        <label>1</label>
    </ligand>
</feature>
<feature type="binding site" evidence="1">
    <location>
        <position position="316"/>
    </location>
    <ligand>
        <name>Mg(2+)</name>
        <dbReference type="ChEBI" id="CHEBI:18420"/>
        <label>2</label>
    </ligand>
</feature>
<feature type="binding site" evidence="1">
    <location>
        <position position="455"/>
    </location>
    <ligand>
        <name>Mg(2+)</name>
        <dbReference type="ChEBI" id="CHEBI:18420"/>
        <label>3</label>
    </ligand>
</feature>
<feature type="binding site" evidence="1">
    <location>
        <position position="459"/>
    </location>
    <ligand>
        <name>Mg(2+)</name>
        <dbReference type="ChEBI" id="CHEBI:18420"/>
        <label>3</label>
    </ligand>
</feature>
<feature type="binding site" evidence="1">
    <location>
        <position position="463"/>
    </location>
    <ligand>
        <name>Mg(2+)</name>
        <dbReference type="ChEBI" id="CHEBI:18420"/>
        <label>3</label>
    </ligand>
</feature>
<name>5EAS_CAPAN</name>
<comment type="function">
    <text evidence="2">Catalyzes the cyclization of trans,trans-farnesyl diphosphate (FPP) to the bicyclic intermediate 5-epi-aristolochene, initial step in the conversion of FPP to the sesquiterpenoid antifungal phytoalexin capsidiol. Produces germacrene A as an enzyme-bound intermediate that is not released by the enzyme, but is further cyclized to produce the bicyclic 5-epi-aristolochene.</text>
</comment>
<comment type="catalytic activity">
    <reaction evidence="2">
        <text>(2E,6E)-farnesyl diphosphate = (+)-5-epi-aristolochene + diphosphate</text>
        <dbReference type="Rhea" id="RHEA:28635"/>
        <dbReference type="ChEBI" id="CHEBI:23925"/>
        <dbReference type="ChEBI" id="CHEBI:33019"/>
        <dbReference type="ChEBI" id="CHEBI:175763"/>
        <dbReference type="EC" id="4.2.3.61"/>
    </reaction>
</comment>
<comment type="cofactor">
    <cofactor evidence="1">
        <name>Mg(2+)</name>
        <dbReference type="ChEBI" id="CHEBI:18420"/>
    </cofactor>
    <text evidence="1">Binds 3 Mg(2+) ions per subunit.</text>
</comment>
<comment type="pathway">
    <text>Secondary metabolite biosynthesis; terpenoid biosynthesis.</text>
</comment>
<comment type="subunit">
    <text evidence="1">Monomer.</text>
</comment>
<comment type="subcellular location">
    <subcellularLocation>
        <location evidence="3">Cytoplasm</location>
    </subcellularLocation>
</comment>
<comment type="tissue specificity">
    <text evidence="2">Expressed only in treated leaves an not detected in control leaves.</text>
</comment>
<comment type="induction">
    <text evidence="2">Up-regulated by UV treatment.</text>
</comment>
<comment type="domain">
    <text evidence="1">The Asp-Asp-Xaa-Xaa-Asp/Glu (DDXXD/E) motif is important for the catalytic activity, presumably through binding to Mg(2+).</text>
</comment>
<comment type="similarity">
    <text evidence="3">Belongs to the terpene synthase family.</text>
</comment>
<keyword id="KW-0963">Cytoplasm</keyword>
<keyword id="KW-0456">Lyase</keyword>
<keyword id="KW-0460">Magnesium</keyword>
<keyword id="KW-0479">Metal-binding</keyword>
<keyword id="KW-0611">Plant defense</keyword>
<accession>O65323</accession>
<dbReference type="EC" id="4.2.3.61"/>
<dbReference type="EMBL" id="AF061285">
    <property type="protein sequence ID" value="AAC61260.1"/>
    <property type="molecule type" value="mRNA"/>
</dbReference>
<dbReference type="PIR" id="T08174">
    <property type="entry name" value="T08174"/>
</dbReference>
<dbReference type="SMR" id="O65323"/>
<dbReference type="UniPathway" id="UPA00213"/>
<dbReference type="GO" id="GO:0005737">
    <property type="term" value="C:cytoplasm"/>
    <property type="evidence" value="ECO:0007669"/>
    <property type="project" value="UniProtKB-SubCell"/>
</dbReference>
<dbReference type="GO" id="GO:0102698">
    <property type="term" value="F:5-epi-aristolochene synthase activity"/>
    <property type="evidence" value="ECO:0007669"/>
    <property type="project" value="UniProtKB-EC"/>
</dbReference>
<dbReference type="GO" id="GO:0000287">
    <property type="term" value="F:magnesium ion binding"/>
    <property type="evidence" value="ECO:0007669"/>
    <property type="project" value="InterPro"/>
</dbReference>
<dbReference type="GO" id="GO:0010333">
    <property type="term" value="F:terpene synthase activity"/>
    <property type="evidence" value="ECO:0007669"/>
    <property type="project" value="InterPro"/>
</dbReference>
<dbReference type="GO" id="GO:0006952">
    <property type="term" value="P:defense response"/>
    <property type="evidence" value="ECO:0007669"/>
    <property type="project" value="UniProtKB-KW"/>
</dbReference>
<dbReference type="GO" id="GO:0016102">
    <property type="term" value="P:diterpenoid biosynthetic process"/>
    <property type="evidence" value="ECO:0007669"/>
    <property type="project" value="InterPro"/>
</dbReference>
<dbReference type="CDD" id="cd00684">
    <property type="entry name" value="Terpene_cyclase_plant_C1"/>
    <property type="match status" value="1"/>
</dbReference>
<dbReference type="FunFam" id="1.10.600.10:FF:000007">
    <property type="entry name" value="Isoprene synthase, chloroplastic"/>
    <property type="match status" value="1"/>
</dbReference>
<dbReference type="FunFam" id="1.50.10.130:FF:000001">
    <property type="entry name" value="Isoprene synthase, chloroplastic"/>
    <property type="match status" value="1"/>
</dbReference>
<dbReference type="Gene3D" id="1.10.600.10">
    <property type="entry name" value="Farnesyl Diphosphate Synthase"/>
    <property type="match status" value="1"/>
</dbReference>
<dbReference type="Gene3D" id="1.50.10.130">
    <property type="entry name" value="Terpene synthase, N-terminal domain"/>
    <property type="match status" value="1"/>
</dbReference>
<dbReference type="InterPro" id="IPR008949">
    <property type="entry name" value="Isoprenoid_synthase_dom_sf"/>
</dbReference>
<dbReference type="InterPro" id="IPR044814">
    <property type="entry name" value="Terpene_cyclase_plant_C1"/>
</dbReference>
<dbReference type="InterPro" id="IPR001906">
    <property type="entry name" value="Terpene_synth_N"/>
</dbReference>
<dbReference type="InterPro" id="IPR036965">
    <property type="entry name" value="Terpene_synth_N_sf"/>
</dbReference>
<dbReference type="InterPro" id="IPR050148">
    <property type="entry name" value="Terpene_synthase-like"/>
</dbReference>
<dbReference type="InterPro" id="IPR005630">
    <property type="entry name" value="Terpene_synthase_metal-bd"/>
</dbReference>
<dbReference type="InterPro" id="IPR008930">
    <property type="entry name" value="Terpenoid_cyclase/PrenylTrfase"/>
</dbReference>
<dbReference type="PANTHER" id="PTHR31225:SF93">
    <property type="entry name" value="ALPHA-HUMULENE_(-)-(E)-BETA-CARYOPHYLLENE SYNTHASE"/>
    <property type="match status" value="1"/>
</dbReference>
<dbReference type="PANTHER" id="PTHR31225">
    <property type="entry name" value="OS04G0344100 PROTEIN-RELATED"/>
    <property type="match status" value="1"/>
</dbReference>
<dbReference type="Pfam" id="PF01397">
    <property type="entry name" value="Terpene_synth"/>
    <property type="match status" value="1"/>
</dbReference>
<dbReference type="Pfam" id="PF03936">
    <property type="entry name" value="Terpene_synth_C"/>
    <property type="match status" value="1"/>
</dbReference>
<dbReference type="SFLD" id="SFLDS00005">
    <property type="entry name" value="Isoprenoid_Synthase_Type_I"/>
    <property type="match status" value="1"/>
</dbReference>
<dbReference type="SFLD" id="SFLDG01604">
    <property type="entry name" value="Terpene_Cyclase_Like_1_C_Termi"/>
    <property type="match status" value="1"/>
</dbReference>
<dbReference type="SUPFAM" id="SSF48239">
    <property type="entry name" value="Terpenoid cyclases/Protein prenyltransferases"/>
    <property type="match status" value="1"/>
</dbReference>
<dbReference type="SUPFAM" id="SSF48576">
    <property type="entry name" value="Terpenoid synthases"/>
    <property type="match status" value="1"/>
</dbReference>
<protein>
    <recommendedName>
        <fullName>5-epiaristolochene synthase</fullName>
        <ecNumber>4.2.3.61</ecNumber>
    </recommendedName>
</protein>
<sequence>MASVAVENNVVNHIAEEIIRPVADFSPSLWGDRFLSFSIDNQVETKYAQEIEPLKEQTRSMLLASGRKLSETLNLIDVIERLGIAYHFEKEIDEILDRIYNENSNFEGDVYNEDLCTCRLQFRLLRQHGYNISLKIFSKFLDGNGRLKESLASDVLGLLSLYEASHVRSHGEDILEDALAFSTTHLESATPHLEYPLKEQVRHALEQSLHKGIPRIEIQFFISSVYDKQAIKNDVLLRFAKLDYNMLQMLHKQELAEVSRWWKDLNFVNTLPYARDRVVECYFWALGVYYEPQYSQARVMLVKTIAMISIVDDTYDAYGTVDELAIYTDVIQRWDIKEIDSLPDYMKISYKALLDLYKDYEKEMSRDGRSHVVYYAKERLKELVKSYNIEAKWFIEGHMPPASEYLRNAFVTTTYYYLATTSYLGMKYAKEQQFEWLSKNPKILEGCVTICRVIDDIATYEVEKNRGQLSTGIECYMRDYSVSTKEAMAKFQEMGESGWKDINEGMLRPTPIPMEFLSRILNLARLVDVTYKHNEDGYTHPEKVIKPHIIAMVVDSFKI</sequence>